<protein>
    <recommendedName>
        <fullName>Short neurotoxin 7</fullName>
        <shortName>SNTX7</shortName>
    </recommendedName>
    <alternativeName>
        <fullName>Alpha-neurotoxin 7</fullName>
    </alternativeName>
</protein>
<name>3S37_PSETE</name>
<evidence type="ECO:0000250" key="1"/>
<evidence type="ECO:0000250" key="2">
    <source>
        <dbReference type="UniProtKB" id="P60301"/>
    </source>
</evidence>
<evidence type="ECO:0000269" key="3">
    <source>
    </source>
</evidence>
<evidence type="ECO:0000269" key="4">
    <source>
    </source>
</evidence>
<evidence type="ECO:0000305" key="5"/>
<evidence type="ECO:0000305" key="6">
    <source>
    </source>
</evidence>
<accession>Q9W7J6</accession>
<accession>Q9I8T8</accession>
<keyword id="KW-0008">Acetylcholine receptor inhibiting toxin</keyword>
<keyword id="KW-1015">Disulfide bond</keyword>
<keyword id="KW-0872">Ion channel impairing toxin</keyword>
<keyword id="KW-0528">Neurotoxin</keyword>
<keyword id="KW-0629">Postsynaptic neurotoxin</keyword>
<keyword id="KW-1185">Reference proteome</keyword>
<keyword id="KW-0964">Secreted</keyword>
<keyword id="KW-0732">Signal</keyword>
<keyword id="KW-0800">Toxin</keyword>
<dbReference type="EMBL" id="AF082981">
    <property type="protein sequence ID" value="AAD40973.1"/>
    <property type="molecule type" value="mRNA"/>
</dbReference>
<dbReference type="EMBL" id="AF204972">
    <property type="protein sequence ID" value="AAF75223.1"/>
    <property type="molecule type" value="Genomic_DNA"/>
</dbReference>
<dbReference type="SMR" id="Q9W7J6"/>
<dbReference type="Proteomes" id="UP000472273">
    <property type="component" value="Unplaced"/>
</dbReference>
<dbReference type="GO" id="GO:0005576">
    <property type="term" value="C:extracellular region"/>
    <property type="evidence" value="ECO:0007669"/>
    <property type="project" value="UniProtKB-SubCell"/>
</dbReference>
<dbReference type="GO" id="GO:0030550">
    <property type="term" value="F:acetylcholine receptor inhibitor activity"/>
    <property type="evidence" value="ECO:0007669"/>
    <property type="project" value="UniProtKB-KW"/>
</dbReference>
<dbReference type="GO" id="GO:0099106">
    <property type="term" value="F:ion channel regulator activity"/>
    <property type="evidence" value="ECO:0007669"/>
    <property type="project" value="UniProtKB-KW"/>
</dbReference>
<dbReference type="GO" id="GO:0090729">
    <property type="term" value="F:toxin activity"/>
    <property type="evidence" value="ECO:0007669"/>
    <property type="project" value="UniProtKB-KW"/>
</dbReference>
<dbReference type="CDD" id="cd00206">
    <property type="entry name" value="TFP_snake_toxin"/>
    <property type="match status" value="1"/>
</dbReference>
<dbReference type="Gene3D" id="2.10.60.10">
    <property type="entry name" value="CD59"/>
    <property type="match status" value="1"/>
</dbReference>
<dbReference type="InterPro" id="IPR003571">
    <property type="entry name" value="Snake_3FTx"/>
</dbReference>
<dbReference type="InterPro" id="IPR045860">
    <property type="entry name" value="Snake_toxin-like_sf"/>
</dbReference>
<dbReference type="InterPro" id="IPR054131">
    <property type="entry name" value="Toxin_cobra-type"/>
</dbReference>
<dbReference type="Pfam" id="PF21947">
    <property type="entry name" value="Toxin_cobra-type"/>
    <property type="match status" value="1"/>
</dbReference>
<dbReference type="SUPFAM" id="SSF57302">
    <property type="entry name" value="Snake toxin-like"/>
    <property type="match status" value="1"/>
</dbReference>
<sequence>MKTLLLTLVMVTIMCLDLGYTLTCYKRYFDTVVCKPQETICYRYIIPATHGNAITYRGCSTSCPSGIRLVCCSTDLCNK</sequence>
<feature type="signal peptide" evidence="1">
    <location>
        <begin position="1"/>
        <end position="21"/>
    </location>
</feature>
<feature type="chain" id="PRO_0000035466" description="Short neurotoxin 7">
    <location>
        <begin position="22"/>
        <end position="79"/>
    </location>
</feature>
<feature type="disulfide bond" evidence="2">
    <location>
        <begin position="24"/>
        <end position="41"/>
    </location>
</feature>
<feature type="disulfide bond" evidence="2">
    <location>
        <begin position="34"/>
        <end position="59"/>
    </location>
</feature>
<feature type="disulfide bond" evidence="2">
    <location>
        <begin position="63"/>
        <end position="71"/>
    </location>
</feature>
<feature type="disulfide bond" evidence="2">
    <location>
        <begin position="72"/>
        <end position="77"/>
    </location>
</feature>
<feature type="sequence conflict" description="In Ref. 2; AAF75223." evidence="5" ref="2">
    <original>Y</original>
    <variation>T</variation>
    <location>
        <position position="56"/>
    </location>
</feature>
<proteinExistence type="evidence at protein level"/>
<organism>
    <name type="scientific">Pseudonaja textilis</name>
    <name type="common">Eastern brown snake</name>
    <dbReference type="NCBI Taxonomy" id="8673"/>
    <lineage>
        <taxon>Eukaryota</taxon>
        <taxon>Metazoa</taxon>
        <taxon>Chordata</taxon>
        <taxon>Craniata</taxon>
        <taxon>Vertebrata</taxon>
        <taxon>Euteleostomi</taxon>
        <taxon>Lepidosauria</taxon>
        <taxon>Squamata</taxon>
        <taxon>Bifurcata</taxon>
        <taxon>Unidentata</taxon>
        <taxon>Episquamata</taxon>
        <taxon>Toxicofera</taxon>
        <taxon>Serpentes</taxon>
        <taxon>Colubroidea</taxon>
        <taxon>Elapidae</taxon>
        <taxon>Hydrophiinae</taxon>
        <taxon>Pseudonaja</taxon>
    </lineage>
</organism>
<reference key="1">
    <citation type="journal article" date="1999" name="Eur. J. Biochem.">
        <title>Postsynaptic short-chain neurotoxins from Pseudonaja textilis: cDNA cloning, expression and protein characterization.</title>
        <authorList>
            <person name="Gong N.L."/>
            <person name="Armugam A."/>
            <person name="Jeyaseelan K."/>
        </authorList>
    </citation>
    <scope>NUCLEOTIDE SEQUENCE [MRNA]</scope>
    <scope>FUNCTION</scope>
    <scope>TOXIC DOSE</scope>
    <source>
        <tissue>Venom gland</tissue>
    </source>
</reference>
<reference key="2">
    <citation type="journal article" date="2000" name="FEBS Lett.">
        <title>Molecular cloning, characterization and evolution of the genes encoding a new group of short-chain alpha-neurotoxins in an Australian elapid, Pseudonaja textilis.</title>
        <authorList>
            <person name="Gong N.L."/>
            <person name="Armugam A."/>
            <person name="Jeyaseelan K."/>
        </authorList>
    </citation>
    <scope>NUCLEOTIDE SEQUENCE [GENOMIC DNA]</scope>
    <source>
        <tissue>Liver</tissue>
    </source>
</reference>
<reference key="3">
    <citation type="journal article" date="2006" name="Mol. Cell. Proteomics">
        <title>Molecular diversity in venom from the Australian Brown snake, Pseudonaja textilis.</title>
        <authorList>
            <person name="Birrell G.W."/>
            <person name="Earl S."/>
            <person name="Masci P.P."/>
            <person name="de Jersey J."/>
            <person name="Wallis T.P."/>
            <person name="Gorman J.J."/>
            <person name="Lavin M.F."/>
        </authorList>
    </citation>
    <scope>IDENTIFICATION BY MASS SPECTROMETRY</scope>
    <scope>SUBCELLULAR LOCATION</scope>
    <source>
        <tissue>Venom</tissue>
    </source>
</reference>
<comment type="function">
    <text evidence="3">Binds with high affinity to muscle nicotinic acetylcholine receptor (nAChR) and hinders acetylcholine binding to the receptor, thereby impairing neuromuscular transmission. Competes with the binding of alpha-bungarotoxin on muscle AChR (from Torpedo) (IC(50)=0.30 uM). In vivo, causes muscle paralysis, spasms and increased respiration.</text>
</comment>
<comment type="subcellular location">
    <subcellularLocation>
        <location evidence="4">Secreted</location>
    </subcellularLocation>
</comment>
<comment type="tissue specificity">
    <text evidence="6">Expressed by the venom gland.</text>
</comment>
<comment type="toxic dose">
    <text evidence="3">LD(50) is 1 mg/kg by intravenous injection into mice.</text>
</comment>
<comment type="similarity">
    <text evidence="5">Belongs to the three-finger toxin family. Short-chain subfamily. Type III alpha-neurotoxin sub-subfamily.</text>
</comment>